<comment type="function">
    <molecule>Spike protein S1</molecule>
    <text evidence="2">Attaches the virion to the cell membrane by interacting with host receptor, initiating the infection.</text>
</comment>
<comment type="function">
    <molecule>Spike protein S2</molecule>
    <text evidence="2">Mediates fusion of the virion and cellular membranes by acting as a class I viral fusion protein. Under the current model, the protein has at least three conformational states: pre-fusion native state, pre-hairpin intermediate state, and post-fusion hairpin state. During viral and target cell membrane fusion, the coiled coil regions (heptad repeats) assume a trimer-of-hairpins structure, positioning the fusion peptide in close proximity to the C-terminal region of the ectodomain. The formation of this structure appears to drive apposition and subsequent fusion of viral and target cell membranes.</text>
</comment>
<comment type="function">
    <molecule>Spike protein S2'</molecule>
    <text evidence="2">Acts as a viral fusion peptide which is unmasked following S2 cleavage occurring upon virus endocytosis.</text>
</comment>
<comment type="subunit">
    <text evidence="2">Homotrimer; each monomer consists of a S1 and a S2 subunit. The resulting peplomers protrude from the virus surface as spikes.</text>
</comment>
<comment type="subcellular location">
    <subcellularLocation>
        <location evidence="2">Virion membrane</location>
        <topology evidence="2">Single-pass type I membrane protein</topology>
    </subcellularLocation>
    <subcellularLocation>
        <location evidence="2">Host endoplasmic reticulum-Golgi intermediate compartment membrane</location>
        <topology evidence="2">Single-pass type I membrane protein</topology>
    </subcellularLocation>
    <subcellularLocation>
        <location evidence="2">Host cell membrane</location>
        <topology evidence="2">Single-pass type I membrane protein</topology>
    </subcellularLocation>
    <text evidence="2">Accumulates in the endoplasmic reticulum-Golgi intermediate compartment, where it participates in virus particle assembly. Some S oligomers are transported to the host plasma membrane, where they may mediate cell-cell fusion.</text>
</comment>
<comment type="domain">
    <text evidence="2">Fusion peptide 1 (FP1) and fusion peptide 2 (FP2) function cooperatively and have a membrane-ordering effect on lipid headgroups and shallow hydrophobic regions of target bilayers. They are considered as two domains of an extended, bipartite FP. The membrane-ordering activity is calcium-dependent and also dependent on correct folding, which is maintained by an internal disulfide bond in FP2.</text>
</comment>
<comment type="PTM">
    <text evidence="2">Specific enzymatic cleavages in vivo yield mature proteins. The precursor is processed into S1 and S2 by host cell furin or another cellular protease to yield the mature S1 and S2 proteins. Additionally, a second cleavage leads to the release of a fusion peptide after viral attachment to host cell receptor.</text>
</comment>
<comment type="PTM">
    <text evidence="2">The cytoplasmic Cys-rich domain is palmitoylated. Spike glycoprotein is digested within host endosomes.</text>
</comment>
<comment type="similarity">
    <text evidence="2">Belongs to the betacoronaviruses spike protein family.</text>
</comment>
<proteinExistence type="evidence at protein level"/>
<protein>
    <recommendedName>
        <fullName evidence="2">Spike glycoprotein</fullName>
        <shortName evidence="2">S glycoprotein</shortName>
    </recommendedName>
    <alternativeName>
        <fullName evidence="2">E2</fullName>
    </alternativeName>
    <alternativeName>
        <fullName evidence="2">Peplomer protein</fullName>
    </alternativeName>
    <component>
        <recommendedName>
            <fullName evidence="2">Spike protein S1</fullName>
        </recommendedName>
    </component>
    <component>
        <recommendedName>
            <fullName evidence="2">Spike protein S2</fullName>
        </recommendedName>
    </component>
    <component>
        <recommendedName>
            <fullName evidence="2">Spike protein S2'</fullName>
        </recommendedName>
    </component>
</protein>
<gene>
    <name evidence="2" type="primary">S</name>
    <name type="ORF">2</name>
</gene>
<dbReference type="EMBL" id="EF065509">
    <property type="protein sequence ID" value="ABN10875.1"/>
    <property type="molecule type" value="Genomic_RNA"/>
</dbReference>
<dbReference type="RefSeq" id="YP_001039962.1">
    <property type="nucleotide sequence ID" value="NC_009020.1"/>
</dbReference>
<dbReference type="PDB" id="5XGR">
    <property type="method" value="X-ray"/>
    <property type="resolution" value="2.10 A"/>
    <property type="chains" value="A/B/C/D/E/F/G/H=389-586"/>
</dbReference>
<dbReference type="PDBsum" id="5XGR"/>
<dbReference type="EMDB" id="EMD-61517"/>
<dbReference type="SMR" id="A3EXD0"/>
<dbReference type="GlyCosmos" id="A3EXD0">
    <property type="glycosylation" value="25 sites, No reported glycans"/>
</dbReference>
<dbReference type="GeneID" id="4836002"/>
<dbReference type="KEGG" id="vg:4836002"/>
<dbReference type="Proteomes" id="UP000007451">
    <property type="component" value="Segment"/>
</dbReference>
<dbReference type="GO" id="GO:0044173">
    <property type="term" value="C:host cell endoplasmic reticulum-Golgi intermediate compartment membrane"/>
    <property type="evidence" value="ECO:0007669"/>
    <property type="project" value="UniProtKB-SubCell"/>
</dbReference>
<dbReference type="GO" id="GO:0020002">
    <property type="term" value="C:host cell plasma membrane"/>
    <property type="evidence" value="ECO:0007669"/>
    <property type="project" value="UniProtKB-SubCell"/>
</dbReference>
<dbReference type="GO" id="GO:0016020">
    <property type="term" value="C:membrane"/>
    <property type="evidence" value="ECO:0007669"/>
    <property type="project" value="UniProtKB-UniRule"/>
</dbReference>
<dbReference type="GO" id="GO:0019031">
    <property type="term" value="C:viral envelope"/>
    <property type="evidence" value="ECO:0007669"/>
    <property type="project" value="UniProtKB-UniRule"/>
</dbReference>
<dbReference type="GO" id="GO:0055036">
    <property type="term" value="C:virion membrane"/>
    <property type="evidence" value="ECO:0007669"/>
    <property type="project" value="UniProtKB-SubCell"/>
</dbReference>
<dbReference type="GO" id="GO:0075509">
    <property type="term" value="P:endocytosis involved in viral entry into host cell"/>
    <property type="evidence" value="ECO:0007669"/>
    <property type="project" value="UniProtKB-UniRule"/>
</dbReference>
<dbReference type="GO" id="GO:0039654">
    <property type="term" value="P:fusion of virus membrane with host endosome membrane"/>
    <property type="evidence" value="ECO:0007669"/>
    <property type="project" value="UniProtKB-UniRule"/>
</dbReference>
<dbReference type="GO" id="GO:0019064">
    <property type="term" value="P:fusion of virus membrane with host plasma membrane"/>
    <property type="evidence" value="ECO:0007669"/>
    <property type="project" value="UniProtKB-UniRule"/>
</dbReference>
<dbReference type="GO" id="GO:0046813">
    <property type="term" value="P:receptor-mediated virion attachment to host cell"/>
    <property type="evidence" value="ECO:0007669"/>
    <property type="project" value="UniProtKB-UniRule"/>
</dbReference>
<dbReference type="CDD" id="cd21626">
    <property type="entry name" value="MERS-CoV-like_Spike_S1_NTD"/>
    <property type="match status" value="1"/>
</dbReference>
<dbReference type="CDD" id="cd22379">
    <property type="entry name" value="MERS-CoV-like_Spike_SD1-2_S1-S2_S2"/>
    <property type="match status" value="1"/>
</dbReference>
<dbReference type="CDD" id="cd21479">
    <property type="entry name" value="MERS-like_CoV_Spike_S1_RBD"/>
    <property type="match status" value="1"/>
</dbReference>
<dbReference type="Gene3D" id="1.20.5.300">
    <property type="match status" value="2"/>
</dbReference>
<dbReference type="Gene3D" id="2.20.210.30">
    <property type="match status" value="1"/>
</dbReference>
<dbReference type="Gene3D" id="3.30.70.1840">
    <property type="match status" value="1"/>
</dbReference>
<dbReference type="Gene3D" id="2.60.120.960">
    <property type="entry name" value="Spike glycoprotein, N-terminal domain"/>
    <property type="match status" value="1"/>
</dbReference>
<dbReference type="HAMAP" id="MF_04099">
    <property type="entry name" value="BETA_CORONA_SPIKE"/>
    <property type="match status" value="1"/>
</dbReference>
<dbReference type="InterPro" id="IPR032500">
    <property type="entry name" value="bCoV_S1_N"/>
</dbReference>
<dbReference type="InterPro" id="IPR042578">
    <property type="entry name" value="BETA_CORONA_SPIKE"/>
</dbReference>
<dbReference type="InterPro" id="IPR043607">
    <property type="entry name" value="CoV_S1_C"/>
</dbReference>
<dbReference type="InterPro" id="IPR043473">
    <property type="entry name" value="S2_sf_CoV"/>
</dbReference>
<dbReference type="InterPro" id="IPR043002">
    <property type="entry name" value="Spike_N_sf"/>
</dbReference>
<dbReference type="InterPro" id="IPR044337">
    <property type="entry name" value="Spike_S1_N_MERS-CoV-like"/>
</dbReference>
<dbReference type="InterPro" id="IPR018548">
    <property type="entry name" value="Spike_S1_RBD_bCoV"/>
</dbReference>
<dbReference type="InterPro" id="IPR044364">
    <property type="entry name" value="Spike_S1_RBD_HKU5-like"/>
</dbReference>
<dbReference type="InterPro" id="IPR036326">
    <property type="entry name" value="Spike_S1_RBD_sf_bCoV"/>
</dbReference>
<dbReference type="InterPro" id="IPR002552">
    <property type="entry name" value="Spike_S2_CoV"/>
</dbReference>
<dbReference type="InterPro" id="IPR043614">
    <property type="entry name" value="Spike_S2_CoV_C"/>
</dbReference>
<dbReference type="InterPro" id="IPR044873">
    <property type="entry name" value="Spike_S2_CoV_HR1"/>
</dbReference>
<dbReference type="InterPro" id="IPR044874">
    <property type="entry name" value="Spike_S2_CoV_HR2"/>
</dbReference>
<dbReference type="Pfam" id="PF16451">
    <property type="entry name" value="bCoV_S1_N"/>
    <property type="match status" value="1"/>
</dbReference>
<dbReference type="Pfam" id="PF09408">
    <property type="entry name" value="bCoV_S1_RBD"/>
    <property type="match status" value="1"/>
</dbReference>
<dbReference type="Pfam" id="PF19209">
    <property type="entry name" value="CoV_S1_C"/>
    <property type="match status" value="1"/>
</dbReference>
<dbReference type="Pfam" id="PF01601">
    <property type="entry name" value="CoV_S2"/>
    <property type="match status" value="1"/>
</dbReference>
<dbReference type="Pfam" id="PF19214">
    <property type="entry name" value="CoV_S2_C"/>
    <property type="match status" value="1"/>
</dbReference>
<dbReference type="SUPFAM" id="SSF111474">
    <property type="entry name" value="Coronavirus S2 glycoprotein"/>
    <property type="match status" value="2"/>
</dbReference>
<dbReference type="SUPFAM" id="SSF143587">
    <property type="entry name" value="SARS receptor-binding domain-like"/>
    <property type="match status" value="1"/>
</dbReference>
<dbReference type="PROSITE" id="PS51921">
    <property type="entry name" value="BCOV_S1_CTD"/>
    <property type="match status" value="1"/>
</dbReference>
<dbReference type="PROSITE" id="PS51922">
    <property type="entry name" value="BCOV_S1_NTD"/>
    <property type="match status" value="1"/>
</dbReference>
<dbReference type="PROSITE" id="PS51923">
    <property type="entry name" value="COV_S2_HR1"/>
    <property type="match status" value="1"/>
</dbReference>
<dbReference type="PROSITE" id="PS51924">
    <property type="entry name" value="COV_S2_HR2"/>
    <property type="match status" value="1"/>
</dbReference>
<sequence>MIRSVLVLMCSLTFIGNLTRGQSVDMGHNGTGSCLDSQVQPDYFESVHTTWPMPIDTSKAEGVIYPNGKSYSNITLTYTGLYPKANDLGKQYLFSDGHSAPGRLNNLFVSNYSSQVESFDDGFVVRIGAAANKTGTTVISQSTFKPIKKIYPAFLLGHSVGNYTPSNRTGRYLNHTLVILPDGCGTILHAFYCVLHPRTQQNCAGETNFKSLSLWDTPASDCVSGSYNQEATLGAFKVYFDLINCTFRYNYTITEDENAEWFGITQDTQGVHLYSSRKENVFRNNMFHFATLPVYQKILYYTVIPRSIRSPFNDRKAWAAFYIYKLHPLTYLLNFDVEGYITKAVDCGYDDLAQLQCSYESFEVETGVYSVSSFEASPRGEFIEQATTQECDFTPMLTGTPPPIYNFKRLVFTNCNYNLTKLLSLFQVSEFSCHQVSPSSLATGCYSSLTVDYFAYSTDMSSYLQPGSAGAIVQFNYKQDFSNPTCRVLATVPQNLTTITKPSNYAYLTECYKTSAYGKNYLYNAPGAYTPCLSLASRGFSTKYQSHSDGELTTTGYIYPVTGNLQMAFIISVQYGTDTNSVCPMQALRNDTSIEDKLDVCVEYSLHGITGRGVFHNCTSVGLRNQRFVYDTFDNLVGYHSDNGNYYCVRPCVSVPVSVIYDKASNSHATLFGSVACSHVTTMMSQFSRMTKTNLLARTTPGPLQTTVGCAMGFINSSMVVDECQLPLGQSLCAIPPTTSSRVRRATSGASDVFQIATLNFTSPLTLAPINSTGFVVAVPTNFTFGVTQEFIETTIQKITVDCKQYVCNGFKKCEDLLKEYGQFCSKINQALHGANLRQDESIANLFSSIKTQNTQPLQAGLNGDFNLTMLQIPQVTTGERKYRSTIEDLLFNKVTIADPGYMQGYDECMQQGPQSARDLICAQYVAGYKVLPPLYDPYMEAAYTSSLLGSIAGASWTAGLSSFAAIPFAQSIFYRLNGVGITQQVLSENQKIIANKFNQALGAMQTGFTTTNLAFNKVQDAVNANAMALSKLAAELSNTFGAISSSISDILARLDTVEQEAQIDRLINGRLTSLNAFVAQQLVRTEAAARSAQLAQDKVNECVKSQSKRNGFCGTGTHIVSFAINAPNGLYFFHVGYQPTSHVNATAAYGLCNTENPQKCIAPIDGYFVLNQTTSTVADSDQQWYYTGSSFFHPEPITEANSKYVSMDVKFENLTNRLPPPLLSNSTDLDFKEELEEFFKNVSSQGPNFQEISKINTTLLNLNTELMVLSEVVKQLNESYIDLKELGNYTFYQKWPWYIWLGFIAGLVALALCVFFILCCTGCGTSCLGKLKCNRCCDSYDEYEVEKIHVH</sequence>
<reference key="1">
    <citation type="journal article" date="2007" name="J. Virol.">
        <title>Comparative analysis of twelve genomes of three novel group 2c and group 2d coronaviruses reveals unique group and subgroup features.</title>
        <authorList>
            <person name="Woo P.C.Y."/>
            <person name="Wang M."/>
            <person name="Lau S.K.P."/>
            <person name="Xu H.F."/>
            <person name="Poon R.W.S."/>
            <person name="Guo R."/>
            <person name="Wong B.H.L."/>
            <person name="Gao K."/>
            <person name="Tsoi H.-W."/>
            <person name="Huang Y."/>
            <person name="Li K.S.M."/>
            <person name="Lam C.S.F."/>
            <person name="Chan K.-H."/>
            <person name="Zheng B.-J."/>
            <person name="Yuen K.-Y."/>
        </authorList>
    </citation>
    <scope>NUCLEOTIDE SEQUENCE [GENOMIC RNA]</scope>
    <source>
        <strain>Isolate HKU5-1</strain>
    </source>
</reference>
<organism>
    <name type="scientific">Bat coronavirus HKU5</name>
    <name type="common">BtCoV</name>
    <name type="synonym">BtCoV/HKU5/2004</name>
    <dbReference type="NCBI Taxonomy" id="694008"/>
    <lineage>
        <taxon>Viruses</taxon>
        <taxon>Riboviria</taxon>
        <taxon>Orthornavirae</taxon>
        <taxon>Pisuviricota</taxon>
        <taxon>Pisoniviricetes</taxon>
        <taxon>Nidovirales</taxon>
        <taxon>Cornidovirineae</taxon>
        <taxon>Coronaviridae</taxon>
        <taxon>Orthocoronavirinae</taxon>
        <taxon>Betacoronavirus</taxon>
        <taxon>Merbecovirus</taxon>
    </lineage>
</organism>
<feature type="signal peptide" evidence="2">
    <location>
        <begin position="1"/>
        <end position="12"/>
    </location>
</feature>
<feature type="chain" id="PRO_0000290324" description="Spike glycoprotein">
    <location>
        <begin position="13"/>
        <end position="1352"/>
    </location>
</feature>
<feature type="chain" id="PRO_0000444063" description="Spike protein S1">
    <location>
        <begin position="13"/>
        <end position="745"/>
    </location>
</feature>
<feature type="chain" id="PRO_0000290326" description="Spike protein S2">
    <location>
        <begin position="746"/>
        <end position="1352"/>
    </location>
</feature>
<feature type="chain" id="PRO_0000444064" description="Spike protein S2'" evidence="2">
    <location>
        <begin position="885"/>
        <end position="1352"/>
    </location>
</feature>
<feature type="topological domain" description="Extracellular" evidence="2">
    <location>
        <begin position="13"/>
        <end position="1297"/>
    </location>
</feature>
<feature type="transmembrane region" description="Helical" evidence="2">
    <location>
        <begin position="1298"/>
        <end position="1318"/>
    </location>
</feature>
<feature type="topological domain" description="Cytoplasmic" evidence="2">
    <location>
        <begin position="1319"/>
        <end position="1352"/>
    </location>
</feature>
<feature type="domain" description="BetaCoV S1-NTD" evidence="4">
    <location>
        <begin position="22"/>
        <end position="359"/>
    </location>
</feature>
<feature type="domain" description="BetaCoV S1-CTD" evidence="3">
    <location>
        <begin position="389"/>
        <end position="585"/>
    </location>
</feature>
<feature type="region of interest" description="Fusion peptide 1" evidence="2">
    <location>
        <begin position="885"/>
        <end position="906"/>
    </location>
</feature>
<feature type="region of interest" description="Fusion peptide 2" evidence="2">
    <location>
        <begin position="904"/>
        <end position="926"/>
    </location>
</feature>
<feature type="region of interest" description="Heptad repeat 1" evidence="2">
    <location>
        <begin position="991"/>
        <end position="1041"/>
    </location>
</feature>
<feature type="region of interest" description="Heptad repeat 2" evidence="2">
    <location>
        <begin position="1247"/>
        <end position="1286"/>
    </location>
</feature>
<feature type="coiled-coil region" evidence="2">
    <location>
        <begin position="1020"/>
        <end position="1064"/>
    </location>
</feature>
<feature type="coiled-coil region" evidence="2">
    <location>
        <begin position="1259"/>
        <end position="1287"/>
    </location>
</feature>
<feature type="short sequence motif" description="KxHxx" evidence="2">
    <location>
        <begin position="1350"/>
        <end position="1352"/>
    </location>
</feature>
<feature type="site" description="Cleavage" evidence="1">
    <location>
        <begin position="745"/>
        <end position="746"/>
    </location>
</feature>
<feature type="site" description="Cleavage" evidence="2">
    <location>
        <begin position="884"/>
        <end position="885"/>
    </location>
</feature>
<feature type="glycosylation site" description="N-linked (GlcNAc...) asparagine; by host" evidence="2">
    <location>
        <position position="29"/>
    </location>
</feature>
<feature type="glycosylation site" description="N-linked (GlcNAc...) asparagine; by host" evidence="2">
    <location>
        <position position="73"/>
    </location>
</feature>
<feature type="glycosylation site" description="N-linked (GlcNAc...) asparagine; by host" evidence="2">
    <location>
        <position position="111"/>
    </location>
</feature>
<feature type="glycosylation site" description="N-linked (GlcNAc...) asparagine; by host" evidence="2">
    <location>
        <position position="132"/>
    </location>
</feature>
<feature type="glycosylation site" description="N-linked (GlcNAc...) asparagine; by host" evidence="2">
    <location>
        <position position="167"/>
    </location>
</feature>
<feature type="glycosylation site" description="N-linked (GlcNAc...) asparagine; by host" evidence="2">
    <location>
        <position position="174"/>
    </location>
</feature>
<feature type="glycosylation site" description="N-linked (GlcNAc...) asparagine; by host" evidence="2">
    <location>
        <position position="244"/>
    </location>
</feature>
<feature type="glycosylation site" description="N-linked (GlcNAc...) asparagine; by host" evidence="2">
    <location>
        <position position="250"/>
    </location>
</feature>
<feature type="glycosylation site" description="N-linked (GlcNAc...) asparagine; by host" evidence="2">
    <location>
        <position position="418"/>
    </location>
</feature>
<feature type="glycosylation site" description="N-linked (GlcNAc...) asparagine; by host" evidence="2">
    <location>
        <position position="495"/>
    </location>
</feature>
<feature type="glycosylation site" description="N-linked (GlcNAc...) asparagine; by host" evidence="2">
    <location>
        <position position="590"/>
    </location>
</feature>
<feature type="glycosylation site" description="N-linked (GlcNAc...) asparagine; by host" evidence="2">
    <location>
        <position position="617"/>
    </location>
</feature>
<feature type="glycosylation site" description="N-linked (GlcNAc...) asparagine; by host" evidence="2">
    <location>
        <position position="716"/>
    </location>
</feature>
<feature type="glycosylation site" description="N-linked (GlcNAc...) asparagine; by host" evidence="2">
    <location>
        <position position="760"/>
    </location>
</feature>
<feature type="glycosylation site" description="N-linked (GlcNAc...) asparagine; by host" evidence="2">
    <location>
        <position position="771"/>
    </location>
</feature>
<feature type="glycosylation site" description="N-linked (GlcNAc...) asparagine; by host" evidence="2">
    <location>
        <position position="782"/>
    </location>
</feature>
<feature type="glycosylation site" description="N-linked (GlcNAc...) asparagine; by host" evidence="2">
    <location>
        <position position="867"/>
    </location>
</feature>
<feature type="glycosylation site" description="N-linked (GlcNAc...) asparagine; by host" evidence="2">
    <location>
        <position position="1145"/>
    </location>
</feature>
<feature type="glycosylation site" description="N-linked (GlcNAc...) asparagine; by host" evidence="2">
    <location>
        <position position="1172"/>
    </location>
</feature>
<feature type="glycosylation site" description="N-linked (GlcNAc...) asparagine; by host" evidence="2">
    <location>
        <position position="1214"/>
    </location>
</feature>
<feature type="glycosylation site" description="N-linked (GlcNAc...) asparagine; by host" evidence="2">
    <location>
        <position position="1226"/>
    </location>
</feature>
<feature type="glycosylation site" description="N-linked (GlcNAc...) asparagine; by host" evidence="2">
    <location>
        <position position="1242"/>
    </location>
</feature>
<feature type="glycosylation site" description="N-linked (GlcNAc...) asparagine; by host" evidence="2">
    <location>
        <position position="1257"/>
    </location>
</feature>
<feature type="glycosylation site" description="N-linked (GlcNAc...) asparagine; by host" evidence="2">
    <location>
        <position position="1278"/>
    </location>
</feature>
<feature type="glycosylation site" description="N-linked (GlcNAc...) asparagine; by host" evidence="2">
    <location>
        <position position="1289"/>
    </location>
</feature>
<feature type="disulfide bond" evidence="4">
    <location>
        <begin position="193"/>
        <end position="245"/>
    </location>
</feature>
<feature type="disulfide bond" evidence="4">
    <location>
        <begin position="347"/>
        <end position="357"/>
    </location>
</feature>
<feature type="disulfide bond" evidence="3">
    <location>
        <begin position="391"/>
        <end position="415"/>
    </location>
</feature>
<feature type="disulfide bond" evidence="3">
    <location>
        <begin position="433"/>
        <end position="486"/>
    </location>
</feature>
<feature type="disulfide bond" evidence="3">
    <location>
        <begin position="445"/>
        <end position="583"/>
    </location>
</feature>
<feature type="disulfide bond" evidence="2">
    <location>
        <begin position="909"/>
        <end position="922"/>
    </location>
</feature>
<feature type="helix" evidence="5">
    <location>
        <begin position="394"/>
        <end position="397"/>
    </location>
</feature>
<feature type="helix" evidence="5">
    <location>
        <begin position="404"/>
        <end position="406"/>
    </location>
</feature>
<feature type="strand" evidence="5">
    <location>
        <begin position="408"/>
        <end position="412"/>
    </location>
</feature>
<feature type="strand" evidence="5">
    <location>
        <begin position="414"/>
        <end position="417"/>
    </location>
</feature>
<feature type="helix" evidence="5">
    <location>
        <begin position="419"/>
        <end position="423"/>
    </location>
</feature>
<feature type="strand" evidence="5">
    <location>
        <begin position="426"/>
        <end position="435"/>
    </location>
</feature>
<feature type="helix" evidence="5">
    <location>
        <begin position="438"/>
        <end position="443"/>
    </location>
</feature>
<feature type="strand" evidence="5">
    <location>
        <begin position="446"/>
        <end position="455"/>
    </location>
</feature>
<feature type="helix" evidence="5">
    <location>
        <begin position="458"/>
        <end position="464"/>
    </location>
</feature>
<feature type="helix" evidence="5">
    <location>
        <begin position="471"/>
        <end position="475"/>
    </location>
</feature>
<feature type="strand" evidence="5">
    <location>
        <begin position="485"/>
        <end position="491"/>
    </location>
</feature>
<feature type="strand" evidence="5">
    <location>
        <begin position="503"/>
        <end position="514"/>
    </location>
</feature>
<feature type="strand" evidence="5">
    <location>
        <begin position="516"/>
        <end position="521"/>
    </location>
</feature>
<feature type="helix" evidence="5">
    <location>
        <begin position="533"/>
        <end position="536"/>
    </location>
</feature>
<feature type="strand" evidence="5">
    <location>
        <begin position="545"/>
        <end position="548"/>
    </location>
</feature>
<feature type="strand" evidence="5">
    <location>
        <begin position="550"/>
        <end position="560"/>
    </location>
</feature>
<feature type="strand" evidence="5">
    <location>
        <begin position="566"/>
        <end position="574"/>
    </location>
</feature>
<feature type="turn" evidence="5">
    <location>
        <begin position="577"/>
        <end position="580"/>
    </location>
</feature>
<feature type="strand" evidence="5">
    <location>
        <begin position="581"/>
        <end position="584"/>
    </location>
</feature>
<accession>A3EXD0</accession>
<evidence type="ECO:0000250" key="1"/>
<evidence type="ECO:0000255" key="2">
    <source>
        <dbReference type="HAMAP-Rule" id="MF_04099"/>
    </source>
</evidence>
<evidence type="ECO:0000255" key="3">
    <source>
        <dbReference type="PROSITE-ProRule" id="PRU01269"/>
    </source>
</evidence>
<evidence type="ECO:0000255" key="4">
    <source>
        <dbReference type="PROSITE-ProRule" id="PRU01270"/>
    </source>
</evidence>
<evidence type="ECO:0007829" key="5">
    <source>
        <dbReference type="PDB" id="5XGR"/>
    </source>
</evidence>
<organismHost>
    <name type="scientific">Pipistrellus abramus</name>
    <name type="common">Japanese pipistrelle</name>
    <name type="synonym">Pipistrellus javanicus abramus</name>
    <dbReference type="NCBI Taxonomy" id="105295"/>
</organismHost>
<keyword id="KW-0002">3D-structure</keyword>
<keyword id="KW-0175">Coiled coil</keyword>
<keyword id="KW-1015">Disulfide bond</keyword>
<keyword id="KW-1170">Fusion of virus membrane with host endosomal membrane</keyword>
<keyword id="KW-1168">Fusion of virus membrane with host membrane</keyword>
<keyword id="KW-0325">Glycoprotein</keyword>
<keyword id="KW-1032">Host cell membrane</keyword>
<keyword id="KW-1043">Host membrane</keyword>
<keyword id="KW-0945">Host-virus interaction</keyword>
<keyword id="KW-0449">Lipoprotein</keyword>
<keyword id="KW-0472">Membrane</keyword>
<keyword id="KW-0564">Palmitate</keyword>
<keyword id="KW-1185">Reference proteome</keyword>
<keyword id="KW-0732">Signal</keyword>
<keyword id="KW-0812">Transmembrane</keyword>
<keyword id="KW-1133">Transmembrane helix</keyword>
<keyword id="KW-1161">Viral attachment to host cell</keyword>
<keyword id="KW-0261">Viral envelope protein</keyword>
<keyword id="KW-1162">Viral penetration into host cytoplasm</keyword>
<keyword id="KW-0946">Virion</keyword>
<keyword id="KW-0843">Virulence</keyword>
<keyword id="KW-1160">Virus entry into host cell</keyword>
<name>SPIKE_BCHK5</name>